<feature type="chain" id="PRO_0000318215" description="Protein-export protein SecB">
    <location>
        <begin position="1"/>
        <end position="150"/>
    </location>
</feature>
<keyword id="KW-0143">Chaperone</keyword>
<keyword id="KW-0963">Cytoplasm</keyword>
<keyword id="KW-0653">Protein transport</keyword>
<keyword id="KW-0811">Translocation</keyword>
<keyword id="KW-0813">Transport</keyword>
<dbReference type="EMBL" id="CP000539">
    <property type="protein sequence ID" value="ABM43615.1"/>
    <property type="molecule type" value="Genomic_DNA"/>
</dbReference>
<dbReference type="SMR" id="A1WBJ0"/>
<dbReference type="STRING" id="232721.Ajs_3502"/>
<dbReference type="KEGG" id="ajs:Ajs_3502"/>
<dbReference type="eggNOG" id="COG1952">
    <property type="taxonomic scope" value="Bacteria"/>
</dbReference>
<dbReference type="HOGENOM" id="CLU_111574_1_0_4"/>
<dbReference type="Proteomes" id="UP000000645">
    <property type="component" value="Chromosome"/>
</dbReference>
<dbReference type="GO" id="GO:0005737">
    <property type="term" value="C:cytoplasm"/>
    <property type="evidence" value="ECO:0007669"/>
    <property type="project" value="UniProtKB-SubCell"/>
</dbReference>
<dbReference type="GO" id="GO:0051082">
    <property type="term" value="F:unfolded protein binding"/>
    <property type="evidence" value="ECO:0007669"/>
    <property type="project" value="InterPro"/>
</dbReference>
<dbReference type="GO" id="GO:0006457">
    <property type="term" value="P:protein folding"/>
    <property type="evidence" value="ECO:0007669"/>
    <property type="project" value="UniProtKB-UniRule"/>
</dbReference>
<dbReference type="GO" id="GO:0051262">
    <property type="term" value="P:protein tetramerization"/>
    <property type="evidence" value="ECO:0007669"/>
    <property type="project" value="InterPro"/>
</dbReference>
<dbReference type="GO" id="GO:0015031">
    <property type="term" value="P:protein transport"/>
    <property type="evidence" value="ECO:0007669"/>
    <property type="project" value="UniProtKB-UniRule"/>
</dbReference>
<dbReference type="Gene3D" id="3.10.420.10">
    <property type="entry name" value="SecB-like"/>
    <property type="match status" value="1"/>
</dbReference>
<dbReference type="HAMAP" id="MF_00821">
    <property type="entry name" value="SecB"/>
    <property type="match status" value="1"/>
</dbReference>
<dbReference type="InterPro" id="IPR003708">
    <property type="entry name" value="SecB"/>
</dbReference>
<dbReference type="InterPro" id="IPR035958">
    <property type="entry name" value="SecB-like_sf"/>
</dbReference>
<dbReference type="NCBIfam" id="NF004394">
    <property type="entry name" value="PRK05751.1-5"/>
    <property type="match status" value="1"/>
</dbReference>
<dbReference type="NCBIfam" id="TIGR00809">
    <property type="entry name" value="secB"/>
    <property type="match status" value="1"/>
</dbReference>
<dbReference type="PANTHER" id="PTHR36918">
    <property type="match status" value="1"/>
</dbReference>
<dbReference type="PANTHER" id="PTHR36918:SF1">
    <property type="entry name" value="PROTEIN-EXPORT PROTEIN SECB"/>
    <property type="match status" value="1"/>
</dbReference>
<dbReference type="Pfam" id="PF02556">
    <property type="entry name" value="SecB"/>
    <property type="match status" value="1"/>
</dbReference>
<dbReference type="PRINTS" id="PR01594">
    <property type="entry name" value="SECBCHAPRONE"/>
</dbReference>
<dbReference type="SUPFAM" id="SSF54611">
    <property type="entry name" value="SecB-like"/>
    <property type="match status" value="1"/>
</dbReference>
<organism>
    <name type="scientific">Acidovorax sp. (strain JS42)</name>
    <dbReference type="NCBI Taxonomy" id="232721"/>
    <lineage>
        <taxon>Bacteria</taxon>
        <taxon>Pseudomonadati</taxon>
        <taxon>Pseudomonadota</taxon>
        <taxon>Betaproteobacteria</taxon>
        <taxon>Burkholderiales</taxon>
        <taxon>Comamonadaceae</taxon>
        <taxon>Acidovorax</taxon>
    </lineage>
</organism>
<accession>A1WBJ0</accession>
<proteinExistence type="inferred from homology"/>
<evidence type="ECO:0000255" key="1">
    <source>
        <dbReference type="HAMAP-Rule" id="MF_00821"/>
    </source>
</evidence>
<protein>
    <recommendedName>
        <fullName evidence="1">Protein-export protein SecB</fullName>
    </recommendedName>
</protein>
<reference key="1">
    <citation type="submission" date="2006-12" db="EMBL/GenBank/DDBJ databases">
        <title>Complete sequence of chromosome 1 of Acidovorax sp. JS42.</title>
        <authorList>
            <person name="Copeland A."/>
            <person name="Lucas S."/>
            <person name="Lapidus A."/>
            <person name="Barry K."/>
            <person name="Detter J.C."/>
            <person name="Glavina del Rio T."/>
            <person name="Dalin E."/>
            <person name="Tice H."/>
            <person name="Pitluck S."/>
            <person name="Chertkov O."/>
            <person name="Brettin T."/>
            <person name="Bruce D."/>
            <person name="Han C."/>
            <person name="Tapia R."/>
            <person name="Gilna P."/>
            <person name="Schmutz J."/>
            <person name="Larimer F."/>
            <person name="Land M."/>
            <person name="Hauser L."/>
            <person name="Kyrpides N."/>
            <person name="Kim E."/>
            <person name="Stahl D."/>
            <person name="Richardson P."/>
        </authorList>
    </citation>
    <scope>NUCLEOTIDE SEQUENCE [LARGE SCALE GENOMIC DNA]</scope>
    <source>
        <strain>JS42</strain>
    </source>
</reference>
<name>SECB_ACISJ</name>
<comment type="function">
    <text evidence="1">One of the proteins required for the normal export of preproteins out of the cell cytoplasm. It is a molecular chaperone that binds to a subset of precursor proteins, maintaining them in a translocation-competent state. It also specifically binds to its receptor SecA.</text>
</comment>
<comment type="subunit">
    <text evidence="1">Homotetramer, a dimer of dimers. One homotetramer interacts with 1 SecA dimer.</text>
</comment>
<comment type="subcellular location">
    <subcellularLocation>
        <location evidence="1">Cytoplasm</location>
    </subcellularLocation>
</comment>
<comment type="similarity">
    <text evidence="1">Belongs to the SecB family.</text>
</comment>
<gene>
    <name evidence="1" type="primary">secB</name>
    <name type="ordered locus">Ajs_3502</name>
</gene>
<sequence>MAEETPVFQIQRVYLKDLSLEQPNSPAILLEQEQPSVDIQLGVEATPVVEGIFEVAVTATVQTKIKDKTVFLVEAKQAGIFEIRNVPEDQMGAIIGIACPQIIYPYLRGNVADTVTRAGFPPVHLAEINFQAMYEQQQAAAAEAATSTAQ</sequence>